<organism>
    <name type="scientific">Ralstonia nicotianae (strain ATCC BAA-1114 / GMI1000)</name>
    <name type="common">Ralstonia solanacearum</name>
    <dbReference type="NCBI Taxonomy" id="267608"/>
    <lineage>
        <taxon>Bacteria</taxon>
        <taxon>Pseudomonadati</taxon>
        <taxon>Pseudomonadota</taxon>
        <taxon>Betaproteobacteria</taxon>
        <taxon>Burkholderiales</taxon>
        <taxon>Burkholderiaceae</taxon>
        <taxon>Ralstonia</taxon>
        <taxon>Ralstonia solanacearum species complex</taxon>
    </lineage>
</organism>
<sequence length="429" mass="46534">MRVLVLGSGVIGVTSAYYLARAGHEVTVVDREAGPALDTSFANAGQISPGYASPWAAPGVPLKAIKWMFQQHAPLSIRPDGTLFQLQWMWQMLRNCNAASYAENKERMVRLAEYSRDCIRALRAETGIAYEGRQQGTLQVFRTQQQLDGAANDIAVLERAGVPYELLSRDDLVRSEPGLASTRHKLAGGLRLPNDETGDCQLFTTRLAAMAEKLGVRFRFNSRINSLIVQNDAVRGALVDGEAMTADLVVVAMGSYSTPFLKNLVGVPVYPLKGFSITVPMTDAERSPVSTVLDETYKVAITRFDDRIRVGGMAQIVGYDKRLDPGKRKTLEFVVSDLFPGGGDVSRATFWTGLRPMTPDGTPIVGPTPVRGLWINTGHGTLGWTMACGSGQLLSDLVSGRSPAIRADDLSVYRYLRGGQAPATKPALA</sequence>
<dbReference type="EC" id="1.4.99.-"/>
<dbReference type="EMBL" id="AL646052">
    <property type="protein sequence ID" value="CAD14628.1"/>
    <property type="molecule type" value="Genomic_DNA"/>
</dbReference>
<dbReference type="RefSeq" id="WP_011000878.1">
    <property type="nucleotide sequence ID" value="NC_003295.1"/>
</dbReference>
<dbReference type="SMR" id="Q8Y0W7"/>
<dbReference type="STRING" id="267608.RSc0926"/>
<dbReference type="EnsemblBacteria" id="CAD14628">
    <property type="protein sequence ID" value="CAD14628"/>
    <property type="gene ID" value="RSc0926"/>
</dbReference>
<dbReference type="KEGG" id="rso:RSc0926"/>
<dbReference type="PATRIC" id="fig|267608.8.peg.949"/>
<dbReference type="eggNOG" id="COG0665">
    <property type="taxonomic scope" value="Bacteria"/>
</dbReference>
<dbReference type="HOGENOM" id="CLU_007884_9_2_4"/>
<dbReference type="Proteomes" id="UP000001436">
    <property type="component" value="Chromosome"/>
</dbReference>
<dbReference type="GO" id="GO:0005737">
    <property type="term" value="C:cytoplasm"/>
    <property type="evidence" value="ECO:0007669"/>
    <property type="project" value="TreeGrafter"/>
</dbReference>
<dbReference type="GO" id="GO:0005886">
    <property type="term" value="C:plasma membrane"/>
    <property type="evidence" value="ECO:0007669"/>
    <property type="project" value="TreeGrafter"/>
</dbReference>
<dbReference type="GO" id="GO:0008718">
    <property type="term" value="F:D-amino-acid dehydrogenase activity"/>
    <property type="evidence" value="ECO:0007669"/>
    <property type="project" value="UniProtKB-UniRule"/>
</dbReference>
<dbReference type="GO" id="GO:0055130">
    <property type="term" value="P:D-alanine catabolic process"/>
    <property type="evidence" value="ECO:0007669"/>
    <property type="project" value="TreeGrafter"/>
</dbReference>
<dbReference type="FunFam" id="3.50.50.60:FF:000020">
    <property type="entry name" value="D-amino acid dehydrogenase"/>
    <property type="match status" value="1"/>
</dbReference>
<dbReference type="Gene3D" id="3.30.9.10">
    <property type="entry name" value="D-Amino Acid Oxidase, subunit A, domain 2"/>
    <property type="match status" value="1"/>
</dbReference>
<dbReference type="Gene3D" id="3.50.50.60">
    <property type="entry name" value="FAD/NAD(P)-binding domain"/>
    <property type="match status" value="2"/>
</dbReference>
<dbReference type="HAMAP" id="MF_01202">
    <property type="entry name" value="DadA"/>
    <property type="match status" value="1"/>
</dbReference>
<dbReference type="InterPro" id="IPR023080">
    <property type="entry name" value="DadA"/>
</dbReference>
<dbReference type="InterPro" id="IPR006076">
    <property type="entry name" value="FAD-dep_OxRdtase"/>
</dbReference>
<dbReference type="InterPro" id="IPR036188">
    <property type="entry name" value="FAD/NAD-bd_sf"/>
</dbReference>
<dbReference type="NCBIfam" id="NF001933">
    <property type="entry name" value="PRK00711.1"/>
    <property type="match status" value="1"/>
</dbReference>
<dbReference type="PANTHER" id="PTHR13847:SF280">
    <property type="entry name" value="D-AMINO ACID DEHYDROGENASE"/>
    <property type="match status" value="1"/>
</dbReference>
<dbReference type="PANTHER" id="PTHR13847">
    <property type="entry name" value="SARCOSINE DEHYDROGENASE-RELATED"/>
    <property type="match status" value="1"/>
</dbReference>
<dbReference type="Pfam" id="PF01266">
    <property type="entry name" value="DAO"/>
    <property type="match status" value="1"/>
</dbReference>
<dbReference type="SUPFAM" id="SSF54373">
    <property type="entry name" value="FAD-linked reductases, C-terminal domain"/>
    <property type="match status" value="1"/>
</dbReference>
<dbReference type="SUPFAM" id="SSF51905">
    <property type="entry name" value="FAD/NAD(P)-binding domain"/>
    <property type="match status" value="1"/>
</dbReference>
<feature type="chain" id="PRO_0000166143" description="D-amino acid dehydrogenase 1">
    <location>
        <begin position="1"/>
        <end position="429"/>
    </location>
</feature>
<feature type="binding site" evidence="2">
    <location>
        <begin position="3"/>
        <end position="17"/>
    </location>
    <ligand>
        <name>FAD</name>
        <dbReference type="ChEBI" id="CHEBI:57692"/>
    </ligand>
</feature>
<protein>
    <recommendedName>
        <fullName>D-amino acid dehydrogenase 1</fullName>
        <ecNumber>1.4.99.-</ecNumber>
    </recommendedName>
</protein>
<keyword id="KW-0274">FAD</keyword>
<keyword id="KW-0285">Flavoprotein</keyword>
<keyword id="KW-0560">Oxidoreductase</keyword>
<keyword id="KW-1185">Reference proteome</keyword>
<accession>Q8Y0W7</accession>
<name>DADA1_RALN1</name>
<evidence type="ECO:0000250" key="1"/>
<evidence type="ECO:0000255" key="2"/>
<evidence type="ECO:0000305" key="3"/>
<gene>
    <name type="primary">dadA1</name>
    <name type="synonym">dadA</name>
    <name type="ordered locus">RSc0926</name>
    <name type="ORF">RS04488</name>
</gene>
<comment type="function">
    <text evidence="1">Oxidative deamination of D-amino acids.</text>
</comment>
<comment type="catalytic activity">
    <reaction>
        <text>a D-alpha-amino acid + A + H2O = a 2-oxocarboxylate + AH2 + NH4(+)</text>
        <dbReference type="Rhea" id="RHEA:18125"/>
        <dbReference type="ChEBI" id="CHEBI:13193"/>
        <dbReference type="ChEBI" id="CHEBI:15377"/>
        <dbReference type="ChEBI" id="CHEBI:17499"/>
        <dbReference type="ChEBI" id="CHEBI:28938"/>
        <dbReference type="ChEBI" id="CHEBI:35179"/>
        <dbReference type="ChEBI" id="CHEBI:59871"/>
    </reaction>
</comment>
<comment type="cofactor">
    <cofactor evidence="1">
        <name>FAD</name>
        <dbReference type="ChEBI" id="CHEBI:57692"/>
    </cofactor>
</comment>
<comment type="similarity">
    <text evidence="3">Belongs to the DadA oxidoreductase family.</text>
</comment>
<proteinExistence type="inferred from homology"/>
<reference key="1">
    <citation type="journal article" date="2002" name="Nature">
        <title>Genome sequence of the plant pathogen Ralstonia solanacearum.</title>
        <authorList>
            <person name="Salanoubat M."/>
            <person name="Genin S."/>
            <person name="Artiguenave F."/>
            <person name="Gouzy J."/>
            <person name="Mangenot S."/>
            <person name="Arlat M."/>
            <person name="Billault A."/>
            <person name="Brottier P."/>
            <person name="Camus J.-C."/>
            <person name="Cattolico L."/>
            <person name="Chandler M."/>
            <person name="Choisne N."/>
            <person name="Claudel-Renard C."/>
            <person name="Cunnac S."/>
            <person name="Demange N."/>
            <person name="Gaspin C."/>
            <person name="Lavie M."/>
            <person name="Moisan A."/>
            <person name="Robert C."/>
            <person name="Saurin W."/>
            <person name="Schiex T."/>
            <person name="Siguier P."/>
            <person name="Thebault P."/>
            <person name="Whalen M."/>
            <person name="Wincker P."/>
            <person name="Levy M."/>
            <person name="Weissenbach J."/>
            <person name="Boucher C.A."/>
        </authorList>
    </citation>
    <scope>NUCLEOTIDE SEQUENCE [LARGE SCALE GENOMIC DNA]</scope>
    <source>
        <strain>ATCC BAA-1114 / GMI1000</strain>
    </source>
</reference>